<evidence type="ECO:0000255" key="1">
    <source>
        <dbReference type="HAMAP-Rule" id="MF_01400"/>
    </source>
</evidence>
<evidence type="ECO:0000255" key="2">
    <source>
        <dbReference type="PROSITE-ProRule" id="PRU01126"/>
    </source>
</evidence>
<proteinExistence type="inferred from homology"/>
<organism>
    <name type="scientific">Yersinia pseudotuberculosis serotype I (strain IP32953)</name>
    <dbReference type="NCBI Taxonomy" id="273123"/>
    <lineage>
        <taxon>Bacteria</taxon>
        <taxon>Pseudomonadati</taxon>
        <taxon>Pseudomonadota</taxon>
        <taxon>Gammaproteobacteria</taxon>
        <taxon>Enterobacterales</taxon>
        <taxon>Yersiniaceae</taxon>
        <taxon>Yersinia</taxon>
    </lineage>
</organism>
<protein>
    <recommendedName>
        <fullName evidence="1">Peptide methionine sulfoxide reductase MsrB</fullName>
        <ecNumber evidence="1">1.8.4.12</ecNumber>
    </recommendedName>
    <alternativeName>
        <fullName evidence="1">Peptide-methionine (R)-S-oxide reductase</fullName>
    </alternativeName>
</protein>
<gene>
    <name evidence="1" type="primary">msrB</name>
    <name type="ordered locus">YPTB2084</name>
</gene>
<feature type="chain" id="PRO_0000140319" description="Peptide methionine sulfoxide reductase MsrB">
    <location>
        <begin position="1"/>
        <end position="137"/>
    </location>
</feature>
<feature type="domain" description="MsrB" evidence="2">
    <location>
        <begin position="7"/>
        <end position="129"/>
    </location>
</feature>
<feature type="active site" description="Nucleophile" evidence="2">
    <location>
        <position position="118"/>
    </location>
</feature>
<feature type="binding site" evidence="2">
    <location>
        <position position="46"/>
    </location>
    <ligand>
        <name>Zn(2+)</name>
        <dbReference type="ChEBI" id="CHEBI:29105"/>
    </ligand>
</feature>
<feature type="binding site" evidence="2">
    <location>
        <position position="49"/>
    </location>
    <ligand>
        <name>Zn(2+)</name>
        <dbReference type="ChEBI" id="CHEBI:29105"/>
    </ligand>
</feature>
<feature type="binding site" evidence="2">
    <location>
        <position position="95"/>
    </location>
    <ligand>
        <name>Zn(2+)</name>
        <dbReference type="ChEBI" id="CHEBI:29105"/>
    </ligand>
</feature>
<feature type="binding site" evidence="2">
    <location>
        <position position="98"/>
    </location>
    <ligand>
        <name>Zn(2+)</name>
        <dbReference type="ChEBI" id="CHEBI:29105"/>
    </ligand>
</feature>
<comment type="catalytic activity">
    <reaction evidence="1">
        <text>L-methionyl-[protein] + [thioredoxin]-disulfide + H2O = L-methionyl-(R)-S-oxide-[protein] + [thioredoxin]-dithiol</text>
        <dbReference type="Rhea" id="RHEA:24164"/>
        <dbReference type="Rhea" id="RHEA-COMP:10698"/>
        <dbReference type="Rhea" id="RHEA-COMP:10700"/>
        <dbReference type="Rhea" id="RHEA-COMP:12313"/>
        <dbReference type="Rhea" id="RHEA-COMP:12314"/>
        <dbReference type="ChEBI" id="CHEBI:15377"/>
        <dbReference type="ChEBI" id="CHEBI:16044"/>
        <dbReference type="ChEBI" id="CHEBI:29950"/>
        <dbReference type="ChEBI" id="CHEBI:45764"/>
        <dbReference type="ChEBI" id="CHEBI:50058"/>
        <dbReference type="EC" id="1.8.4.12"/>
    </reaction>
</comment>
<comment type="cofactor">
    <cofactor evidence="1">
        <name>Zn(2+)</name>
        <dbReference type="ChEBI" id="CHEBI:29105"/>
    </cofactor>
    <text evidence="1">Binds 1 zinc ion per subunit. The zinc ion is important for the structural integrity of the protein.</text>
</comment>
<comment type="similarity">
    <text evidence="1">Belongs to the MsrB Met sulfoxide reductase family.</text>
</comment>
<reference key="1">
    <citation type="journal article" date="2004" name="Proc. Natl. Acad. Sci. U.S.A.">
        <title>Insights into the evolution of Yersinia pestis through whole-genome comparison with Yersinia pseudotuberculosis.</title>
        <authorList>
            <person name="Chain P.S.G."/>
            <person name="Carniel E."/>
            <person name="Larimer F.W."/>
            <person name="Lamerdin J."/>
            <person name="Stoutland P.O."/>
            <person name="Regala W.M."/>
            <person name="Georgescu A.M."/>
            <person name="Vergez L.M."/>
            <person name="Land M.L."/>
            <person name="Motin V.L."/>
            <person name="Brubaker R.R."/>
            <person name="Fowler J."/>
            <person name="Hinnebusch J."/>
            <person name="Marceau M."/>
            <person name="Medigue C."/>
            <person name="Simonet M."/>
            <person name="Chenal-Francisque V."/>
            <person name="Souza B."/>
            <person name="Dacheux D."/>
            <person name="Elliott J.M."/>
            <person name="Derbise A."/>
            <person name="Hauser L.J."/>
            <person name="Garcia E."/>
        </authorList>
    </citation>
    <scope>NUCLEOTIDE SEQUENCE [LARGE SCALE GENOMIC DNA]</scope>
    <source>
        <strain>IP32953</strain>
    </source>
</reference>
<name>MSRB_YERPS</name>
<dbReference type="EC" id="1.8.4.12" evidence="1"/>
<dbReference type="EMBL" id="BX936398">
    <property type="protein sequence ID" value="CAH21322.1"/>
    <property type="molecule type" value="Genomic_DNA"/>
</dbReference>
<dbReference type="RefSeq" id="WP_002211677.1">
    <property type="nucleotide sequence ID" value="NZ_CP009712.1"/>
</dbReference>
<dbReference type="SMR" id="Q66AP6"/>
<dbReference type="GeneID" id="57976510"/>
<dbReference type="KEGG" id="ypo:BZ17_380"/>
<dbReference type="KEGG" id="yps:YPTB2084"/>
<dbReference type="PATRIC" id="fig|273123.14.peg.406"/>
<dbReference type="Proteomes" id="UP000001011">
    <property type="component" value="Chromosome"/>
</dbReference>
<dbReference type="GO" id="GO:0005737">
    <property type="term" value="C:cytoplasm"/>
    <property type="evidence" value="ECO:0007669"/>
    <property type="project" value="TreeGrafter"/>
</dbReference>
<dbReference type="GO" id="GO:0033743">
    <property type="term" value="F:peptide-methionine (R)-S-oxide reductase activity"/>
    <property type="evidence" value="ECO:0007669"/>
    <property type="project" value="UniProtKB-UniRule"/>
</dbReference>
<dbReference type="GO" id="GO:0008270">
    <property type="term" value="F:zinc ion binding"/>
    <property type="evidence" value="ECO:0007669"/>
    <property type="project" value="UniProtKB-UniRule"/>
</dbReference>
<dbReference type="GO" id="GO:0030091">
    <property type="term" value="P:protein repair"/>
    <property type="evidence" value="ECO:0007669"/>
    <property type="project" value="InterPro"/>
</dbReference>
<dbReference type="GO" id="GO:0006979">
    <property type="term" value="P:response to oxidative stress"/>
    <property type="evidence" value="ECO:0007669"/>
    <property type="project" value="InterPro"/>
</dbReference>
<dbReference type="FunFam" id="2.170.150.20:FF:000001">
    <property type="entry name" value="Peptide methionine sulfoxide reductase MsrB"/>
    <property type="match status" value="1"/>
</dbReference>
<dbReference type="Gene3D" id="2.170.150.20">
    <property type="entry name" value="Peptide methionine sulfoxide reductase"/>
    <property type="match status" value="1"/>
</dbReference>
<dbReference type="HAMAP" id="MF_01400">
    <property type="entry name" value="MsrB"/>
    <property type="match status" value="1"/>
</dbReference>
<dbReference type="InterPro" id="IPR028427">
    <property type="entry name" value="Met_Sox_Rdtase_MsrB"/>
</dbReference>
<dbReference type="InterPro" id="IPR002579">
    <property type="entry name" value="Met_Sox_Rdtase_MsrB_dom"/>
</dbReference>
<dbReference type="InterPro" id="IPR011057">
    <property type="entry name" value="Mss4-like_sf"/>
</dbReference>
<dbReference type="NCBIfam" id="TIGR00357">
    <property type="entry name" value="peptide-methionine (R)-S-oxide reductase MsrB"/>
    <property type="match status" value="1"/>
</dbReference>
<dbReference type="PANTHER" id="PTHR10173">
    <property type="entry name" value="METHIONINE SULFOXIDE REDUCTASE"/>
    <property type="match status" value="1"/>
</dbReference>
<dbReference type="PANTHER" id="PTHR10173:SF52">
    <property type="entry name" value="METHIONINE-R-SULFOXIDE REDUCTASE B1"/>
    <property type="match status" value="1"/>
</dbReference>
<dbReference type="Pfam" id="PF01641">
    <property type="entry name" value="SelR"/>
    <property type="match status" value="1"/>
</dbReference>
<dbReference type="SUPFAM" id="SSF51316">
    <property type="entry name" value="Mss4-like"/>
    <property type="match status" value="1"/>
</dbReference>
<dbReference type="PROSITE" id="PS51790">
    <property type="entry name" value="MSRB"/>
    <property type="match status" value="1"/>
</dbReference>
<keyword id="KW-0479">Metal-binding</keyword>
<keyword id="KW-0560">Oxidoreductase</keyword>
<keyword id="KW-0862">Zinc</keyword>
<sequence length="137" mass="15515">MAKELNPTENIEKLSDIQRYVTQERGTEAPFTGKLLHNKRDGVYQCLCCHQPLFISESKFDSGCGWPSFYQPIDADSIRYIDDYSHNMHRIEIRCGNCDAHLGHVFPDGPQPTGERYCINSASLNFVDDQNGEQTAG</sequence>
<accession>Q66AP6</accession>